<comment type="function">
    <text evidence="1">Secreted metalloproteinase that allows assimilation of proteinaceous substrates. Shows high activities on basic nuclear substrates such as histone and protamine (By similarity).</text>
</comment>
<comment type="catalytic activity">
    <reaction>
        <text>Preferential cleavage of bonds with hydrophobic residues in P1'. Also 3-Asn-|-Gln-4 and 8-Gly-|-Ser-9 bonds in insulin B chain.</text>
        <dbReference type="EC" id="3.4.24.39"/>
    </reaction>
</comment>
<comment type="cofactor">
    <cofactor evidence="1">
        <name>Zn(2+)</name>
        <dbReference type="ChEBI" id="CHEBI:29105"/>
    </cofactor>
    <text evidence="1">Binds 1 zinc ion per subunit.</text>
</comment>
<comment type="subcellular location">
    <subcellularLocation>
        <location evidence="1">Secreted</location>
    </subcellularLocation>
</comment>
<comment type="similarity">
    <text evidence="4">Belongs to the peptidase M35 family.</text>
</comment>
<keyword id="KW-0165">Cleavage on pair of basic residues</keyword>
<keyword id="KW-1015">Disulfide bond</keyword>
<keyword id="KW-0378">Hydrolase</keyword>
<keyword id="KW-0479">Metal-binding</keyword>
<keyword id="KW-0482">Metalloprotease</keyword>
<keyword id="KW-0645">Protease</keyword>
<keyword id="KW-1185">Reference proteome</keyword>
<keyword id="KW-0964">Secreted</keyword>
<keyword id="KW-0732">Signal</keyword>
<keyword id="KW-0862">Zinc</keyword>
<keyword id="KW-0865">Zymogen</keyword>
<dbReference type="EC" id="3.4.24.39"/>
<dbReference type="EMBL" id="DS027054">
    <property type="protein sequence ID" value="EAW10799.1"/>
    <property type="molecule type" value="Genomic_DNA"/>
</dbReference>
<dbReference type="RefSeq" id="XP_001272225.1">
    <property type="nucleotide sequence ID" value="XM_001272224.1"/>
</dbReference>
<dbReference type="SMR" id="A1CIU4"/>
<dbReference type="STRING" id="344612.A1CIU4"/>
<dbReference type="MEROPS" id="M35.002"/>
<dbReference type="EnsemblFungi" id="EAW10799">
    <property type="protein sequence ID" value="EAW10799"/>
    <property type="gene ID" value="ACLA_052720"/>
</dbReference>
<dbReference type="GeneID" id="4703879"/>
<dbReference type="KEGG" id="act:ACLA_052720"/>
<dbReference type="VEuPathDB" id="FungiDB:ACLA_052720"/>
<dbReference type="eggNOG" id="ENOG502SGF5">
    <property type="taxonomic scope" value="Eukaryota"/>
</dbReference>
<dbReference type="HOGENOM" id="CLU_039313_1_1_1"/>
<dbReference type="OMA" id="ANCDLYY"/>
<dbReference type="OrthoDB" id="412874at2759"/>
<dbReference type="Proteomes" id="UP000006701">
    <property type="component" value="Unassembled WGS sequence"/>
</dbReference>
<dbReference type="GO" id="GO:0005576">
    <property type="term" value="C:extracellular region"/>
    <property type="evidence" value="ECO:0007669"/>
    <property type="project" value="UniProtKB-SubCell"/>
</dbReference>
<dbReference type="GO" id="GO:0046872">
    <property type="term" value="F:metal ion binding"/>
    <property type="evidence" value="ECO:0007669"/>
    <property type="project" value="UniProtKB-KW"/>
</dbReference>
<dbReference type="GO" id="GO:0004222">
    <property type="term" value="F:metalloendopeptidase activity"/>
    <property type="evidence" value="ECO:0007669"/>
    <property type="project" value="InterPro"/>
</dbReference>
<dbReference type="GO" id="GO:0006508">
    <property type="term" value="P:proteolysis"/>
    <property type="evidence" value="ECO:0007669"/>
    <property type="project" value="UniProtKB-KW"/>
</dbReference>
<dbReference type="CDD" id="cd11008">
    <property type="entry name" value="M35_deuterolysin_like"/>
    <property type="match status" value="1"/>
</dbReference>
<dbReference type="Gene3D" id="2.60.40.2970">
    <property type="match status" value="1"/>
</dbReference>
<dbReference type="Gene3D" id="3.40.390.10">
    <property type="entry name" value="Collagenase (Catalytic Domain)"/>
    <property type="match status" value="1"/>
</dbReference>
<dbReference type="InterPro" id="IPR050414">
    <property type="entry name" value="Fungal_M35_metalloproteases"/>
</dbReference>
<dbReference type="InterPro" id="IPR029463">
    <property type="entry name" value="Lys_MEP"/>
</dbReference>
<dbReference type="InterPro" id="IPR024079">
    <property type="entry name" value="MetalloPept_cat_dom_sf"/>
</dbReference>
<dbReference type="InterPro" id="IPR001384">
    <property type="entry name" value="Peptidase_M35"/>
</dbReference>
<dbReference type="PANTHER" id="PTHR37016">
    <property type="match status" value="1"/>
</dbReference>
<dbReference type="PANTHER" id="PTHR37016:SF3">
    <property type="entry name" value="NEUTRAL PROTEASE 2-RELATED"/>
    <property type="match status" value="1"/>
</dbReference>
<dbReference type="Pfam" id="PF02102">
    <property type="entry name" value="Peptidase_M35"/>
    <property type="match status" value="1"/>
</dbReference>
<dbReference type="PRINTS" id="PR00768">
    <property type="entry name" value="DEUTEROLYSIN"/>
</dbReference>
<dbReference type="SMART" id="SM01351">
    <property type="entry name" value="Aspzincin_M35"/>
    <property type="match status" value="1"/>
</dbReference>
<dbReference type="SUPFAM" id="SSF55486">
    <property type="entry name" value="Metalloproteases ('zincins'), catalytic domain"/>
    <property type="match status" value="1"/>
</dbReference>
<dbReference type="PROSITE" id="PS00142">
    <property type="entry name" value="ZINC_PROTEASE"/>
    <property type="match status" value="1"/>
</dbReference>
<organism>
    <name type="scientific">Aspergillus clavatus (strain ATCC 1007 / CBS 513.65 / DSM 816 / NCTC 3887 / NRRL 1 / QM 1276 / 107)</name>
    <dbReference type="NCBI Taxonomy" id="344612"/>
    <lineage>
        <taxon>Eukaryota</taxon>
        <taxon>Fungi</taxon>
        <taxon>Dikarya</taxon>
        <taxon>Ascomycota</taxon>
        <taxon>Pezizomycotina</taxon>
        <taxon>Eurotiomycetes</taxon>
        <taxon>Eurotiomycetidae</taxon>
        <taxon>Eurotiales</taxon>
        <taxon>Aspergillaceae</taxon>
        <taxon>Aspergillus</taxon>
        <taxon>Aspergillus subgen. Fumigati</taxon>
    </lineage>
</organism>
<accession>A1CIU4</accession>
<proteinExistence type="inferred from homology"/>
<evidence type="ECO:0000250" key="1"/>
<evidence type="ECO:0000255" key="2"/>
<evidence type="ECO:0000255" key="3">
    <source>
        <dbReference type="PROSITE-ProRule" id="PRU10095"/>
    </source>
</evidence>
<evidence type="ECO:0000305" key="4"/>
<gene>
    <name type="ORF">ACLA_052720</name>
</gene>
<sequence>MQLTVLASAILALAQGALAIPAKAPALDVTLSQIDNTRVKAVVKNTGAEEVTFVHLNFFRDAAPVKKVSLFRNATEVPFNGIKLRFRNKGLTDDVLTTLAAGATFEDEFDIASTADLTEGGVVTVRSQGVVPLTKDNKVSGYIPFTSNEIELEVDGAKAAAVPAAINLLDRRTKVASCSGSRATALQTALRNTVSLANAAASAAESGSSSRFSEYFKTTSSATRSTVAARLRAVAREAGSTSSGKTTYYCGDPYGYCDPNVLAYTLPSKNIVANCDIYYSDLPALARSCHAQDQATTTLHEFTHAPGVYSPGTDDLGYGYQAATALSTSDALNNADTYALFANAVNLNC</sequence>
<name>NPIIA_ASPCL</name>
<feature type="signal peptide" evidence="2">
    <location>
        <begin position="1"/>
        <end position="19"/>
    </location>
</feature>
<feature type="propeptide" id="PRO_0000407086" evidence="1">
    <location>
        <begin position="20"/>
        <end position="172"/>
    </location>
</feature>
<feature type="chain" id="PRO_0000407087" description="Neutral protease 2 homolog ACLA_052720">
    <location>
        <begin position="173"/>
        <end position="349"/>
    </location>
</feature>
<feature type="active site" evidence="3">
    <location>
        <position position="301"/>
    </location>
</feature>
<feature type="binding site" evidence="3">
    <location>
        <position position="300"/>
    </location>
    <ligand>
        <name>Zn(2+)</name>
        <dbReference type="ChEBI" id="CHEBI:29105"/>
        <note>catalytic</note>
    </ligand>
</feature>
<feature type="binding site" evidence="3">
    <location>
        <position position="304"/>
    </location>
    <ligand>
        <name>Zn(2+)</name>
        <dbReference type="ChEBI" id="CHEBI:29105"/>
        <note>catalytic</note>
    </ligand>
</feature>
<feature type="binding site" evidence="3">
    <location>
        <position position="315"/>
    </location>
    <ligand>
        <name>Zn(2+)</name>
        <dbReference type="ChEBI" id="CHEBI:29105"/>
        <note>catalytic</note>
    </ligand>
</feature>
<feature type="disulfide bond" evidence="1">
    <location>
        <begin position="178"/>
        <end position="250"/>
    </location>
</feature>
<feature type="disulfide bond" evidence="1">
    <location>
        <begin position="257"/>
        <end position="275"/>
    </location>
</feature>
<protein>
    <recommendedName>
        <fullName>Neutral protease 2 homolog ACLA_052720</fullName>
        <ecNumber>3.4.24.39</ecNumber>
    </recommendedName>
    <alternativeName>
        <fullName>Deuterolysin ACLA_052720</fullName>
    </alternativeName>
</protein>
<reference key="1">
    <citation type="journal article" date="2008" name="PLoS Genet.">
        <title>Genomic islands in the pathogenic filamentous fungus Aspergillus fumigatus.</title>
        <authorList>
            <person name="Fedorova N.D."/>
            <person name="Khaldi N."/>
            <person name="Joardar V.S."/>
            <person name="Maiti R."/>
            <person name="Amedeo P."/>
            <person name="Anderson M.J."/>
            <person name="Crabtree J."/>
            <person name="Silva J.C."/>
            <person name="Badger J.H."/>
            <person name="Albarraq A."/>
            <person name="Angiuoli S."/>
            <person name="Bussey H."/>
            <person name="Bowyer P."/>
            <person name="Cotty P.J."/>
            <person name="Dyer P.S."/>
            <person name="Egan A."/>
            <person name="Galens K."/>
            <person name="Fraser-Liggett C.M."/>
            <person name="Haas B.J."/>
            <person name="Inman J.M."/>
            <person name="Kent R."/>
            <person name="Lemieux S."/>
            <person name="Malavazi I."/>
            <person name="Orvis J."/>
            <person name="Roemer T."/>
            <person name="Ronning C.M."/>
            <person name="Sundaram J.P."/>
            <person name="Sutton G."/>
            <person name="Turner G."/>
            <person name="Venter J.C."/>
            <person name="White O.R."/>
            <person name="Whitty B.R."/>
            <person name="Youngman P."/>
            <person name="Wolfe K.H."/>
            <person name="Goldman G.H."/>
            <person name="Wortman J.R."/>
            <person name="Jiang B."/>
            <person name="Denning D.W."/>
            <person name="Nierman W.C."/>
        </authorList>
    </citation>
    <scope>NUCLEOTIDE SEQUENCE [LARGE SCALE GENOMIC DNA]</scope>
    <source>
        <strain>ATCC 1007 / CBS 513.65 / DSM 816 / NCTC 3887 / NRRL 1 / QM 1276 / 107</strain>
    </source>
</reference>